<gene>
    <name evidence="2" type="primary">SOD1</name>
</gene>
<feature type="initiator methionine" description="Removed" evidence="3">
    <location>
        <position position="1"/>
    </location>
</feature>
<feature type="chain" id="PRO_0000164065" description="Superoxide dismutase [Cu-Zn]">
    <location>
        <begin position="2"/>
        <end position="155"/>
    </location>
</feature>
<feature type="binding site" evidence="1">
    <location>
        <position position="48"/>
    </location>
    <ligand>
        <name>Cu cation</name>
        <dbReference type="ChEBI" id="CHEBI:23378"/>
        <note>catalytic</note>
    </ligand>
</feature>
<feature type="binding site" evidence="1">
    <location>
        <position position="50"/>
    </location>
    <ligand>
        <name>Cu cation</name>
        <dbReference type="ChEBI" id="CHEBI:23378"/>
        <note>catalytic</note>
    </ligand>
</feature>
<feature type="binding site" evidence="1">
    <location>
        <position position="65"/>
    </location>
    <ligand>
        <name>Cu cation</name>
        <dbReference type="ChEBI" id="CHEBI:23378"/>
        <note>catalytic</note>
    </ligand>
</feature>
<feature type="binding site" evidence="1">
    <location>
        <position position="65"/>
    </location>
    <ligand>
        <name>Zn(2+)</name>
        <dbReference type="ChEBI" id="CHEBI:29105"/>
        <note>structural</note>
    </ligand>
</feature>
<feature type="binding site" evidence="1">
    <location>
        <position position="73"/>
    </location>
    <ligand>
        <name>Zn(2+)</name>
        <dbReference type="ChEBI" id="CHEBI:29105"/>
        <note>structural</note>
    </ligand>
</feature>
<feature type="binding site" evidence="1">
    <location>
        <position position="82"/>
    </location>
    <ligand>
        <name>Zn(2+)</name>
        <dbReference type="ChEBI" id="CHEBI:29105"/>
        <note>structural</note>
    </ligand>
</feature>
<feature type="binding site" evidence="1">
    <location>
        <position position="85"/>
    </location>
    <ligand>
        <name>Zn(2+)</name>
        <dbReference type="ChEBI" id="CHEBI:29105"/>
        <note>structural</note>
    </ligand>
</feature>
<feature type="binding site" evidence="1">
    <location>
        <position position="122"/>
    </location>
    <ligand>
        <name>Cu cation</name>
        <dbReference type="ChEBI" id="CHEBI:23378"/>
        <note>catalytic</note>
    </ligand>
</feature>
<feature type="modified residue" description="N-acetylalanine" evidence="3">
    <location>
        <position position="2"/>
    </location>
</feature>
<feature type="modified residue" description="N6-succinyllysine" evidence="5">
    <location>
        <position position="4"/>
    </location>
</feature>
<feature type="modified residue" description="N6-succinyllysine" evidence="5">
    <location>
        <position position="10"/>
    </location>
</feature>
<feature type="modified residue" description="N6-succinyllysine" evidence="5">
    <location>
        <position position="93"/>
    </location>
</feature>
<feature type="modified residue" description="Phosphoserine" evidence="2">
    <location>
        <position position="100"/>
    </location>
</feature>
<feature type="modified residue" description="Phosphoserine" evidence="2">
    <location>
        <position position="104"/>
    </location>
</feature>
<feature type="modified residue" description="Phosphoserine" evidence="4">
    <location>
        <position position="107"/>
    </location>
</feature>
<feature type="modified residue" description="Phosphoserine" evidence="5">
    <location>
        <position position="109"/>
    </location>
</feature>
<feature type="modified residue" description="N6-acetyllysine; alternate" evidence="2">
    <location>
        <position position="124"/>
    </location>
</feature>
<feature type="modified residue" description="N6-succinyllysine; alternate" evidence="2">
    <location>
        <position position="124"/>
    </location>
</feature>
<feature type="modified residue" description="N6-acetyllysine; alternate" evidence="5">
    <location>
        <position position="138"/>
    </location>
</feature>
<feature type="modified residue" description="N6-succinyllysine; alternate" evidence="5">
    <location>
        <position position="138"/>
    </location>
</feature>
<feature type="lipid moiety-binding region" description="S-palmitoyl cysteine" evidence="1">
    <location>
        <position position="7"/>
    </location>
</feature>
<feature type="disulfide bond" evidence="1">
    <location>
        <begin position="59"/>
        <end position="148"/>
    </location>
</feature>
<feature type="sequence conflict" description="In Ref. 2; CAH90782." evidence="6" ref="2">
    <original>A</original>
    <variation>V</variation>
    <location>
        <position position="97"/>
    </location>
</feature>
<comment type="function">
    <text>Destroys radicals which are normally produced within the cells and which are toxic to biological systems.</text>
</comment>
<comment type="catalytic activity">
    <reaction>
        <text>2 superoxide + 2 H(+) = H2O2 + O2</text>
        <dbReference type="Rhea" id="RHEA:20696"/>
        <dbReference type="ChEBI" id="CHEBI:15378"/>
        <dbReference type="ChEBI" id="CHEBI:15379"/>
        <dbReference type="ChEBI" id="CHEBI:16240"/>
        <dbReference type="ChEBI" id="CHEBI:18421"/>
        <dbReference type="EC" id="1.15.1.1"/>
    </reaction>
</comment>
<comment type="cofactor">
    <cofactor evidence="1">
        <name>Cu cation</name>
        <dbReference type="ChEBI" id="CHEBI:23378"/>
    </cofactor>
    <text evidence="1">Binds 1 copper ion per subunit.</text>
</comment>
<comment type="cofactor">
    <cofactor evidence="1">
        <name>Zn(2+)</name>
        <dbReference type="ChEBI" id="CHEBI:29105"/>
    </cofactor>
    <text evidence="1">Binds 1 zinc ion per subunit.</text>
</comment>
<comment type="subunit">
    <text evidence="2 5">Homodimer; non-disulfide-linked (By similarity). Heterodimer with SOD1. The heterodimer CCS:SOD1 interacts with SLC31A1; this heterotrimer is Cu(1+)-mediated and its maintenance is regulated through SOD1 activation (By similarity).</text>
</comment>
<comment type="subcellular location">
    <subcellularLocation>
        <location evidence="1">Cytoplasm</location>
    </subcellularLocation>
    <subcellularLocation>
        <location evidence="1">Nucleus</location>
    </subcellularLocation>
</comment>
<comment type="PTM">
    <text evidence="1">Palmitoylation helps nuclear targeting and decreases catalytic activity.</text>
</comment>
<comment type="PTM">
    <text evidence="2">Succinylation, adjacent to copper catalytic site, probably inhibits activity. Desuccinylation by SIRT5 enhances activity.</text>
</comment>
<comment type="similarity">
    <text evidence="6">Belongs to the Cu-Zn superoxide dismutase family.</text>
</comment>
<protein>
    <recommendedName>
        <fullName evidence="2">Superoxide dismutase [Cu-Zn]</fullName>
        <ecNumber evidence="2">1.15.1.1</ecNumber>
    </recommendedName>
</protein>
<proteinExistence type="evidence at transcript level"/>
<dbReference type="EC" id="1.15.1.1" evidence="2"/>
<dbReference type="EMBL" id="AB087267">
    <property type="protein sequence ID" value="BAC20346.1"/>
    <property type="molecule type" value="mRNA"/>
</dbReference>
<dbReference type="EMBL" id="CR858555">
    <property type="protein sequence ID" value="CAH90782.1"/>
    <property type="molecule type" value="mRNA"/>
</dbReference>
<dbReference type="RefSeq" id="XP_054324465.1">
    <property type="nucleotide sequence ID" value="XM_054468490.2"/>
</dbReference>
<dbReference type="SMR" id="Q8HXQ4"/>
<dbReference type="GeneID" id="129022379"/>
<dbReference type="KEGG" id="pon:100172349"/>
<dbReference type="GO" id="GO:0005737">
    <property type="term" value="C:cytoplasm"/>
    <property type="evidence" value="ECO:0000250"/>
    <property type="project" value="UniProtKB"/>
</dbReference>
<dbReference type="GO" id="GO:0031410">
    <property type="term" value="C:cytoplasmic vesicle"/>
    <property type="evidence" value="ECO:0000250"/>
    <property type="project" value="UniProtKB"/>
</dbReference>
<dbReference type="GO" id="GO:0005829">
    <property type="term" value="C:cytosol"/>
    <property type="evidence" value="ECO:0000250"/>
    <property type="project" value="UniProtKB"/>
</dbReference>
<dbReference type="GO" id="GO:0032839">
    <property type="term" value="C:dendrite cytoplasm"/>
    <property type="evidence" value="ECO:0000250"/>
    <property type="project" value="UniProtKB"/>
</dbReference>
<dbReference type="GO" id="GO:0005739">
    <property type="term" value="C:mitochondrion"/>
    <property type="evidence" value="ECO:0000250"/>
    <property type="project" value="UniProtKB"/>
</dbReference>
<dbReference type="GO" id="GO:0043025">
    <property type="term" value="C:neuronal cell body"/>
    <property type="evidence" value="ECO:0000250"/>
    <property type="project" value="UniProtKB"/>
</dbReference>
<dbReference type="GO" id="GO:0005634">
    <property type="term" value="C:nucleus"/>
    <property type="evidence" value="ECO:0000250"/>
    <property type="project" value="UniProtKB"/>
</dbReference>
<dbReference type="GO" id="GO:0032991">
    <property type="term" value="C:protein-containing complex"/>
    <property type="evidence" value="ECO:0000250"/>
    <property type="project" value="UniProtKB"/>
</dbReference>
<dbReference type="GO" id="GO:0005507">
    <property type="term" value="F:copper ion binding"/>
    <property type="evidence" value="ECO:0000250"/>
    <property type="project" value="UniProtKB"/>
</dbReference>
<dbReference type="GO" id="GO:0030346">
    <property type="term" value="F:protein phosphatase 2B binding"/>
    <property type="evidence" value="ECO:0000250"/>
    <property type="project" value="UniProtKB"/>
</dbReference>
<dbReference type="GO" id="GO:0051087">
    <property type="term" value="F:protein-folding chaperone binding"/>
    <property type="evidence" value="ECO:0000250"/>
    <property type="project" value="UniProtKB"/>
</dbReference>
<dbReference type="GO" id="GO:0004784">
    <property type="term" value="F:superoxide dismutase activity"/>
    <property type="evidence" value="ECO:0000250"/>
    <property type="project" value="UniProtKB"/>
</dbReference>
<dbReference type="GO" id="GO:0008270">
    <property type="term" value="F:zinc ion binding"/>
    <property type="evidence" value="ECO:0000250"/>
    <property type="project" value="UniProtKB"/>
</dbReference>
<dbReference type="GO" id="GO:0060088">
    <property type="term" value="P:auditory receptor cell stereocilium organization"/>
    <property type="evidence" value="ECO:0000250"/>
    <property type="project" value="UniProtKB"/>
</dbReference>
<dbReference type="GO" id="GO:0007566">
    <property type="term" value="P:embryo implantation"/>
    <property type="evidence" value="ECO:0000250"/>
    <property type="project" value="UniProtKB"/>
</dbReference>
<dbReference type="GO" id="GO:0006749">
    <property type="term" value="P:glutathione metabolic process"/>
    <property type="evidence" value="ECO:0000250"/>
    <property type="project" value="UniProtKB"/>
</dbReference>
<dbReference type="GO" id="GO:0060047">
    <property type="term" value="P:heart contraction"/>
    <property type="evidence" value="ECO:0000250"/>
    <property type="project" value="UniProtKB"/>
</dbReference>
<dbReference type="GO" id="GO:0050665">
    <property type="term" value="P:hydrogen peroxide biosynthetic process"/>
    <property type="evidence" value="ECO:0000250"/>
    <property type="project" value="UniProtKB"/>
</dbReference>
<dbReference type="GO" id="GO:0006879">
    <property type="term" value="P:intracellular iron ion homeostasis"/>
    <property type="evidence" value="ECO:0000250"/>
    <property type="project" value="UniProtKB"/>
</dbReference>
<dbReference type="GO" id="GO:0007626">
    <property type="term" value="P:locomotory behavior"/>
    <property type="evidence" value="ECO:0000250"/>
    <property type="project" value="UniProtKB"/>
</dbReference>
<dbReference type="GO" id="GO:0046716">
    <property type="term" value="P:muscle cell cellular homeostasis"/>
    <property type="evidence" value="ECO:0000250"/>
    <property type="project" value="UniProtKB"/>
</dbReference>
<dbReference type="GO" id="GO:0002262">
    <property type="term" value="P:myeloid cell homeostasis"/>
    <property type="evidence" value="ECO:0000250"/>
    <property type="project" value="UniProtKB"/>
</dbReference>
<dbReference type="GO" id="GO:0043524">
    <property type="term" value="P:negative regulation of neuron apoptotic process"/>
    <property type="evidence" value="ECO:0000250"/>
    <property type="project" value="UniProtKB"/>
</dbReference>
<dbReference type="GO" id="GO:0060052">
    <property type="term" value="P:neurofilament cytoskeleton organization"/>
    <property type="evidence" value="ECO:0000250"/>
    <property type="project" value="UniProtKB"/>
</dbReference>
<dbReference type="GO" id="GO:0001541">
    <property type="term" value="P:ovarian follicle development"/>
    <property type="evidence" value="ECO:0000250"/>
    <property type="project" value="UniProtKB"/>
</dbReference>
<dbReference type="GO" id="GO:0032287">
    <property type="term" value="P:peripheral nervous system myelin maintenance"/>
    <property type="evidence" value="ECO:0000250"/>
    <property type="project" value="UniProtKB"/>
</dbReference>
<dbReference type="GO" id="GO:0001819">
    <property type="term" value="P:positive regulation of cytokine production"/>
    <property type="evidence" value="ECO:0000250"/>
    <property type="project" value="UniProtKB"/>
</dbReference>
<dbReference type="GO" id="GO:0043410">
    <property type="term" value="P:positive regulation of MAPK cascade"/>
    <property type="evidence" value="ECO:0000250"/>
    <property type="project" value="UniProtKB"/>
</dbReference>
<dbReference type="GO" id="GO:0072593">
    <property type="term" value="P:reactive oxygen species metabolic process"/>
    <property type="evidence" value="ECO:0000250"/>
    <property type="project" value="UniProtKB"/>
</dbReference>
<dbReference type="GO" id="GO:0008217">
    <property type="term" value="P:regulation of blood pressure"/>
    <property type="evidence" value="ECO:0000250"/>
    <property type="project" value="UniProtKB"/>
</dbReference>
<dbReference type="GO" id="GO:0051881">
    <property type="term" value="P:regulation of mitochondrial membrane potential"/>
    <property type="evidence" value="ECO:0000250"/>
    <property type="project" value="UniProtKB"/>
</dbReference>
<dbReference type="GO" id="GO:0040014">
    <property type="term" value="P:regulation of multicellular organism growth"/>
    <property type="evidence" value="ECO:0000250"/>
    <property type="project" value="UniProtKB"/>
</dbReference>
<dbReference type="GO" id="GO:0060087">
    <property type="term" value="P:relaxation of vascular associated smooth muscle"/>
    <property type="evidence" value="ECO:0000250"/>
    <property type="project" value="UniProtKB"/>
</dbReference>
<dbReference type="GO" id="GO:0019430">
    <property type="term" value="P:removal of superoxide radicals"/>
    <property type="evidence" value="ECO:0000250"/>
    <property type="project" value="UniProtKB"/>
</dbReference>
<dbReference type="GO" id="GO:0048678">
    <property type="term" value="P:response to axon injury"/>
    <property type="evidence" value="ECO:0000250"/>
    <property type="project" value="UniProtKB"/>
</dbReference>
<dbReference type="GO" id="GO:0045471">
    <property type="term" value="P:response to ethanol"/>
    <property type="evidence" value="ECO:0000250"/>
    <property type="project" value="UniProtKB"/>
</dbReference>
<dbReference type="GO" id="GO:0009408">
    <property type="term" value="P:response to heat"/>
    <property type="evidence" value="ECO:0000250"/>
    <property type="project" value="UniProtKB"/>
</dbReference>
<dbReference type="GO" id="GO:0042542">
    <property type="term" value="P:response to hydrogen peroxide"/>
    <property type="evidence" value="ECO:0000250"/>
    <property type="project" value="UniProtKB"/>
</dbReference>
<dbReference type="GO" id="GO:0000303">
    <property type="term" value="P:response to superoxide"/>
    <property type="evidence" value="ECO:0000250"/>
    <property type="project" value="UniProtKB"/>
</dbReference>
<dbReference type="GO" id="GO:0001895">
    <property type="term" value="P:retina homeostasis"/>
    <property type="evidence" value="ECO:0000250"/>
    <property type="project" value="UniProtKB"/>
</dbReference>
<dbReference type="GO" id="GO:0007605">
    <property type="term" value="P:sensory perception of sound"/>
    <property type="evidence" value="ECO:0000250"/>
    <property type="project" value="UniProtKB"/>
</dbReference>
<dbReference type="GO" id="GO:0007283">
    <property type="term" value="P:spermatogenesis"/>
    <property type="evidence" value="ECO:0000250"/>
    <property type="project" value="UniProtKB"/>
</dbReference>
<dbReference type="GO" id="GO:0006801">
    <property type="term" value="P:superoxide metabolic process"/>
    <property type="evidence" value="ECO:0000250"/>
    <property type="project" value="UniProtKB"/>
</dbReference>
<dbReference type="GO" id="GO:0019226">
    <property type="term" value="P:transmission of nerve impulse"/>
    <property type="evidence" value="ECO:0000250"/>
    <property type="project" value="UniProtKB"/>
</dbReference>
<dbReference type="CDD" id="cd00305">
    <property type="entry name" value="Cu-Zn_Superoxide_Dismutase"/>
    <property type="match status" value="1"/>
</dbReference>
<dbReference type="FunFam" id="2.60.40.200:FF:000001">
    <property type="entry name" value="Superoxide dismutase [Cu-Zn]"/>
    <property type="match status" value="1"/>
</dbReference>
<dbReference type="Gene3D" id="2.60.40.200">
    <property type="entry name" value="Superoxide dismutase, copper/zinc binding domain"/>
    <property type="match status" value="1"/>
</dbReference>
<dbReference type="InterPro" id="IPR036423">
    <property type="entry name" value="SOD-like_Cu/Zn_dom_sf"/>
</dbReference>
<dbReference type="InterPro" id="IPR024134">
    <property type="entry name" value="SOD_Cu/Zn_/chaperone"/>
</dbReference>
<dbReference type="InterPro" id="IPR018152">
    <property type="entry name" value="SOD_Cu/Zn_BS"/>
</dbReference>
<dbReference type="InterPro" id="IPR001424">
    <property type="entry name" value="SOD_Cu_Zn_dom"/>
</dbReference>
<dbReference type="PANTHER" id="PTHR10003">
    <property type="entry name" value="SUPEROXIDE DISMUTASE CU-ZN -RELATED"/>
    <property type="match status" value="1"/>
</dbReference>
<dbReference type="Pfam" id="PF00080">
    <property type="entry name" value="Sod_Cu"/>
    <property type="match status" value="1"/>
</dbReference>
<dbReference type="PRINTS" id="PR00068">
    <property type="entry name" value="CUZNDISMTASE"/>
</dbReference>
<dbReference type="SUPFAM" id="SSF49329">
    <property type="entry name" value="Cu,Zn superoxide dismutase-like"/>
    <property type="match status" value="1"/>
</dbReference>
<dbReference type="PROSITE" id="PS00087">
    <property type="entry name" value="SOD_CU_ZN_1"/>
    <property type="match status" value="1"/>
</dbReference>
<dbReference type="PROSITE" id="PS00332">
    <property type="entry name" value="SOD_CU_ZN_2"/>
    <property type="match status" value="1"/>
</dbReference>
<keyword id="KW-0007">Acetylation</keyword>
<keyword id="KW-0049">Antioxidant</keyword>
<keyword id="KW-0186">Copper</keyword>
<keyword id="KW-0963">Cytoplasm</keyword>
<keyword id="KW-1015">Disulfide bond</keyword>
<keyword id="KW-0449">Lipoprotein</keyword>
<keyword id="KW-0479">Metal-binding</keyword>
<keyword id="KW-0539">Nucleus</keyword>
<keyword id="KW-0560">Oxidoreductase</keyword>
<keyword id="KW-0564">Palmitate</keyword>
<keyword id="KW-0597">Phosphoprotein</keyword>
<keyword id="KW-0862">Zinc</keyword>
<name>SODC_PONPY</name>
<reference key="1">
    <citation type="journal article" date="2002" name="Gene">
        <title>Structure, molecular evolution, and gene expression of primate superoxide dismutases.</title>
        <authorList>
            <person name="Fukuhara R."/>
            <person name="Tezuka T."/>
            <person name="Kageyama T."/>
        </authorList>
    </citation>
    <scope>NUCLEOTIDE SEQUENCE [MRNA]</scope>
</reference>
<reference key="2">
    <citation type="submission" date="2004-11" db="EMBL/GenBank/DDBJ databases">
        <authorList>
            <consortium name="The German cDNA consortium"/>
        </authorList>
    </citation>
    <scope>NUCLEOTIDE SEQUENCE [LARGE SCALE MRNA]</scope>
    <source>
        <tissue>Kidney</tissue>
    </source>
</reference>
<accession>Q8HXQ4</accession>
<accession>Q5RBS8</accession>
<sequence>MATKAVCVLKGDNSPVKGIINFEQKERNGPVKVWGSIEGLTEGLHGFHVHEFGDNTVGCTSAGPHFNPLSRKHGGPKDEERHVGDLGNVTADKDGVASVSIEDSVISLSGDHCIIGRTLVVHEKADDLGKGGNEESTKTGNAGSRLACGVIGIAQ</sequence>
<organism>
    <name type="scientific">Pongo pygmaeus</name>
    <name type="common">Bornean orangutan</name>
    <dbReference type="NCBI Taxonomy" id="9600"/>
    <lineage>
        <taxon>Eukaryota</taxon>
        <taxon>Metazoa</taxon>
        <taxon>Chordata</taxon>
        <taxon>Craniata</taxon>
        <taxon>Vertebrata</taxon>
        <taxon>Euteleostomi</taxon>
        <taxon>Mammalia</taxon>
        <taxon>Eutheria</taxon>
        <taxon>Euarchontoglires</taxon>
        <taxon>Primates</taxon>
        <taxon>Haplorrhini</taxon>
        <taxon>Catarrhini</taxon>
        <taxon>Hominidae</taxon>
        <taxon>Pongo</taxon>
    </lineage>
</organism>
<evidence type="ECO:0000250" key="1"/>
<evidence type="ECO:0000250" key="2">
    <source>
        <dbReference type="UniProtKB" id="P00441"/>
    </source>
</evidence>
<evidence type="ECO:0000250" key="3">
    <source>
        <dbReference type="UniProtKB" id="P00442"/>
    </source>
</evidence>
<evidence type="ECO:0000250" key="4">
    <source>
        <dbReference type="UniProtKB" id="P07632"/>
    </source>
</evidence>
<evidence type="ECO:0000250" key="5">
    <source>
        <dbReference type="UniProtKB" id="P08228"/>
    </source>
</evidence>
<evidence type="ECO:0000305" key="6"/>